<protein>
    <recommendedName>
        <fullName evidence="1">Glutamate racemase</fullName>
        <ecNumber evidence="1">5.1.1.3</ecNumber>
    </recommendedName>
</protein>
<name>MURI_RALPJ</name>
<gene>
    <name evidence="1" type="primary">murI</name>
    <name type="ordered locus">Rpic_2103</name>
</gene>
<keyword id="KW-0133">Cell shape</keyword>
<keyword id="KW-0961">Cell wall biogenesis/degradation</keyword>
<keyword id="KW-0413">Isomerase</keyword>
<keyword id="KW-0573">Peptidoglycan synthesis</keyword>
<comment type="function">
    <text evidence="1">Provides the (R)-glutamate required for cell wall biosynthesis.</text>
</comment>
<comment type="catalytic activity">
    <reaction evidence="1">
        <text>L-glutamate = D-glutamate</text>
        <dbReference type="Rhea" id="RHEA:12813"/>
        <dbReference type="ChEBI" id="CHEBI:29985"/>
        <dbReference type="ChEBI" id="CHEBI:29986"/>
        <dbReference type="EC" id="5.1.1.3"/>
    </reaction>
</comment>
<comment type="pathway">
    <text evidence="1">Cell wall biogenesis; peptidoglycan biosynthesis.</text>
</comment>
<comment type="similarity">
    <text evidence="1">Belongs to the aspartate/glutamate racemases family.</text>
</comment>
<organism>
    <name type="scientific">Ralstonia pickettii (strain 12J)</name>
    <dbReference type="NCBI Taxonomy" id="402626"/>
    <lineage>
        <taxon>Bacteria</taxon>
        <taxon>Pseudomonadati</taxon>
        <taxon>Pseudomonadota</taxon>
        <taxon>Betaproteobacteria</taxon>
        <taxon>Burkholderiales</taxon>
        <taxon>Burkholderiaceae</taxon>
        <taxon>Ralstonia</taxon>
    </lineage>
</organism>
<dbReference type="EC" id="5.1.1.3" evidence="1"/>
<dbReference type="EMBL" id="CP001068">
    <property type="protein sequence ID" value="ACD27237.1"/>
    <property type="molecule type" value="Genomic_DNA"/>
</dbReference>
<dbReference type="SMR" id="B2U6V5"/>
<dbReference type="STRING" id="402626.Rpic_2103"/>
<dbReference type="KEGG" id="rpi:Rpic_2103"/>
<dbReference type="PATRIC" id="fig|402626.5.peg.3251"/>
<dbReference type="eggNOG" id="COG0796">
    <property type="taxonomic scope" value="Bacteria"/>
</dbReference>
<dbReference type="HOGENOM" id="CLU_052344_2_1_4"/>
<dbReference type="UniPathway" id="UPA00219"/>
<dbReference type="GO" id="GO:0008881">
    <property type="term" value="F:glutamate racemase activity"/>
    <property type="evidence" value="ECO:0007669"/>
    <property type="project" value="UniProtKB-UniRule"/>
</dbReference>
<dbReference type="GO" id="GO:0071555">
    <property type="term" value="P:cell wall organization"/>
    <property type="evidence" value="ECO:0007669"/>
    <property type="project" value="UniProtKB-KW"/>
</dbReference>
<dbReference type="GO" id="GO:0009252">
    <property type="term" value="P:peptidoglycan biosynthetic process"/>
    <property type="evidence" value="ECO:0007669"/>
    <property type="project" value="UniProtKB-UniRule"/>
</dbReference>
<dbReference type="GO" id="GO:0008360">
    <property type="term" value="P:regulation of cell shape"/>
    <property type="evidence" value="ECO:0007669"/>
    <property type="project" value="UniProtKB-KW"/>
</dbReference>
<dbReference type="FunFam" id="3.40.50.1860:FF:000001">
    <property type="entry name" value="Glutamate racemase"/>
    <property type="match status" value="1"/>
</dbReference>
<dbReference type="Gene3D" id="3.40.50.1860">
    <property type="match status" value="2"/>
</dbReference>
<dbReference type="HAMAP" id="MF_00258">
    <property type="entry name" value="Glu_racemase"/>
    <property type="match status" value="1"/>
</dbReference>
<dbReference type="InterPro" id="IPR015942">
    <property type="entry name" value="Asp/Glu/hydantoin_racemase"/>
</dbReference>
<dbReference type="InterPro" id="IPR001920">
    <property type="entry name" value="Asp/Glu_race"/>
</dbReference>
<dbReference type="InterPro" id="IPR018187">
    <property type="entry name" value="Asp/Glu_racemase_AS_1"/>
</dbReference>
<dbReference type="InterPro" id="IPR033134">
    <property type="entry name" value="Asp/Glu_racemase_AS_2"/>
</dbReference>
<dbReference type="InterPro" id="IPR004391">
    <property type="entry name" value="Glu_race"/>
</dbReference>
<dbReference type="NCBIfam" id="TIGR00067">
    <property type="entry name" value="glut_race"/>
    <property type="match status" value="1"/>
</dbReference>
<dbReference type="PANTHER" id="PTHR21198">
    <property type="entry name" value="GLUTAMATE RACEMASE"/>
    <property type="match status" value="1"/>
</dbReference>
<dbReference type="PANTHER" id="PTHR21198:SF2">
    <property type="entry name" value="GLUTAMATE RACEMASE"/>
    <property type="match status" value="1"/>
</dbReference>
<dbReference type="Pfam" id="PF01177">
    <property type="entry name" value="Asp_Glu_race"/>
    <property type="match status" value="1"/>
</dbReference>
<dbReference type="SUPFAM" id="SSF53681">
    <property type="entry name" value="Aspartate/glutamate racemase"/>
    <property type="match status" value="2"/>
</dbReference>
<dbReference type="PROSITE" id="PS00923">
    <property type="entry name" value="ASP_GLU_RACEMASE_1"/>
    <property type="match status" value="1"/>
</dbReference>
<dbReference type="PROSITE" id="PS00924">
    <property type="entry name" value="ASP_GLU_RACEMASE_2"/>
    <property type="match status" value="1"/>
</dbReference>
<sequence>MTTRAQAPVGVFDSGLGGLSVLRAIRAELPAESLLYLADSRHAPYGEKSPEYIADRTLRVCEWLVDQGCKALVIACNTATAQAVHVLREKLAVPVIGVEPGLKPAVATSKSRVVGVLATESTLRSEKFARLLAGASGDCKVLSQPGYGLVPLIERGDTHSPAVLELLRAYLQPMLDANADTLVLGCTHYPFLEDAIHEIAGDRLTLIDTGHAVARHLGRTLAAAGLQASGQAATPCFMSTGDVLPLQAMVAALLGEAPMAQRVDIGDAPLSPVAVSLASQPE</sequence>
<evidence type="ECO:0000255" key="1">
    <source>
        <dbReference type="HAMAP-Rule" id="MF_00258"/>
    </source>
</evidence>
<reference key="1">
    <citation type="submission" date="2008-05" db="EMBL/GenBank/DDBJ databases">
        <title>Complete sequence of chromosome 1 of Ralstonia pickettii 12J.</title>
        <authorList>
            <person name="Lucas S."/>
            <person name="Copeland A."/>
            <person name="Lapidus A."/>
            <person name="Glavina del Rio T."/>
            <person name="Dalin E."/>
            <person name="Tice H."/>
            <person name="Bruce D."/>
            <person name="Goodwin L."/>
            <person name="Pitluck S."/>
            <person name="Meincke L."/>
            <person name="Brettin T."/>
            <person name="Detter J.C."/>
            <person name="Han C."/>
            <person name="Kuske C.R."/>
            <person name="Schmutz J."/>
            <person name="Larimer F."/>
            <person name="Land M."/>
            <person name="Hauser L."/>
            <person name="Kyrpides N."/>
            <person name="Mikhailova N."/>
            <person name="Marsh T."/>
            <person name="Richardson P."/>
        </authorList>
    </citation>
    <scope>NUCLEOTIDE SEQUENCE [LARGE SCALE GENOMIC DNA]</scope>
    <source>
        <strain>12J</strain>
    </source>
</reference>
<feature type="chain" id="PRO_1000114060" description="Glutamate racemase">
    <location>
        <begin position="1"/>
        <end position="282"/>
    </location>
</feature>
<feature type="active site" description="Proton donor/acceptor" evidence="1">
    <location>
        <position position="76"/>
    </location>
</feature>
<feature type="active site" description="Proton donor/acceptor" evidence="1">
    <location>
        <position position="186"/>
    </location>
</feature>
<feature type="binding site" evidence="1">
    <location>
        <begin position="13"/>
        <end position="14"/>
    </location>
    <ligand>
        <name>substrate</name>
    </ligand>
</feature>
<feature type="binding site" evidence="1">
    <location>
        <begin position="45"/>
        <end position="46"/>
    </location>
    <ligand>
        <name>substrate</name>
    </ligand>
</feature>
<feature type="binding site" evidence="1">
    <location>
        <begin position="77"/>
        <end position="78"/>
    </location>
    <ligand>
        <name>substrate</name>
    </ligand>
</feature>
<feature type="binding site" evidence="1">
    <location>
        <begin position="187"/>
        <end position="188"/>
    </location>
    <ligand>
        <name>substrate</name>
    </ligand>
</feature>
<accession>B2U6V5</accession>
<proteinExistence type="inferred from homology"/>